<protein>
    <recommendedName>
        <fullName>Uncharacterized protein DDB_G0282951</fullName>
    </recommendedName>
</protein>
<feature type="signal peptide" evidence="1">
    <location>
        <begin position="1"/>
        <end position="23"/>
    </location>
</feature>
<feature type="chain" id="PRO_0000351246" description="Uncharacterized protein DDB_G0282951">
    <location>
        <begin position="24"/>
        <end position="133"/>
    </location>
</feature>
<feature type="region of interest" description="Disordered" evidence="2">
    <location>
        <begin position="82"/>
        <end position="133"/>
    </location>
</feature>
<feature type="compositionally biased region" description="Low complexity" evidence="2">
    <location>
        <begin position="96"/>
        <end position="118"/>
    </location>
</feature>
<reference key="1">
    <citation type="journal article" date="2005" name="Nature">
        <title>The genome of the social amoeba Dictyostelium discoideum.</title>
        <authorList>
            <person name="Eichinger L."/>
            <person name="Pachebat J.A."/>
            <person name="Gloeckner G."/>
            <person name="Rajandream M.A."/>
            <person name="Sucgang R."/>
            <person name="Berriman M."/>
            <person name="Song J."/>
            <person name="Olsen R."/>
            <person name="Szafranski K."/>
            <person name="Xu Q."/>
            <person name="Tunggal B."/>
            <person name="Kummerfeld S."/>
            <person name="Madera M."/>
            <person name="Konfortov B.A."/>
            <person name="Rivero F."/>
            <person name="Bankier A.T."/>
            <person name="Lehmann R."/>
            <person name="Hamlin N."/>
            <person name="Davies R."/>
            <person name="Gaudet P."/>
            <person name="Fey P."/>
            <person name="Pilcher K."/>
            <person name="Chen G."/>
            <person name="Saunders D."/>
            <person name="Sodergren E.J."/>
            <person name="Davis P."/>
            <person name="Kerhornou A."/>
            <person name="Nie X."/>
            <person name="Hall N."/>
            <person name="Anjard C."/>
            <person name="Hemphill L."/>
            <person name="Bason N."/>
            <person name="Farbrother P."/>
            <person name="Desany B."/>
            <person name="Just E."/>
            <person name="Morio T."/>
            <person name="Rost R."/>
            <person name="Churcher C.M."/>
            <person name="Cooper J."/>
            <person name="Haydock S."/>
            <person name="van Driessche N."/>
            <person name="Cronin A."/>
            <person name="Goodhead I."/>
            <person name="Muzny D.M."/>
            <person name="Mourier T."/>
            <person name="Pain A."/>
            <person name="Lu M."/>
            <person name="Harper D."/>
            <person name="Lindsay R."/>
            <person name="Hauser H."/>
            <person name="James K.D."/>
            <person name="Quiles M."/>
            <person name="Madan Babu M."/>
            <person name="Saito T."/>
            <person name="Buchrieser C."/>
            <person name="Wardroper A."/>
            <person name="Felder M."/>
            <person name="Thangavelu M."/>
            <person name="Johnson D."/>
            <person name="Knights A."/>
            <person name="Loulseged H."/>
            <person name="Mungall K.L."/>
            <person name="Oliver K."/>
            <person name="Price C."/>
            <person name="Quail M.A."/>
            <person name="Urushihara H."/>
            <person name="Hernandez J."/>
            <person name="Rabbinowitsch E."/>
            <person name="Steffen D."/>
            <person name="Sanders M."/>
            <person name="Ma J."/>
            <person name="Kohara Y."/>
            <person name="Sharp S."/>
            <person name="Simmonds M.N."/>
            <person name="Spiegler S."/>
            <person name="Tivey A."/>
            <person name="Sugano S."/>
            <person name="White B."/>
            <person name="Walker D."/>
            <person name="Woodward J.R."/>
            <person name="Winckler T."/>
            <person name="Tanaka Y."/>
            <person name="Shaulsky G."/>
            <person name="Schleicher M."/>
            <person name="Weinstock G.M."/>
            <person name="Rosenthal A."/>
            <person name="Cox E.C."/>
            <person name="Chisholm R.L."/>
            <person name="Gibbs R.A."/>
            <person name="Loomis W.F."/>
            <person name="Platzer M."/>
            <person name="Kay R.R."/>
            <person name="Williams J.G."/>
            <person name="Dear P.H."/>
            <person name="Noegel A.A."/>
            <person name="Barrell B.G."/>
            <person name="Kuspa A."/>
        </authorList>
    </citation>
    <scope>NUCLEOTIDE SEQUENCE [LARGE SCALE GENOMIC DNA]</scope>
    <source>
        <strain>AX4</strain>
    </source>
</reference>
<comment type="subcellular location">
    <subcellularLocation>
        <location evidence="3">Secreted</location>
    </subcellularLocation>
</comment>
<accession>Q54RS6</accession>
<evidence type="ECO:0000255" key="1"/>
<evidence type="ECO:0000256" key="2">
    <source>
        <dbReference type="SAM" id="MobiDB-lite"/>
    </source>
</evidence>
<evidence type="ECO:0000305" key="3"/>
<name>Y5280_DICDI</name>
<gene>
    <name type="ORF">DDB_G0282951</name>
</gene>
<proteinExistence type="inferred from homology"/>
<dbReference type="EMBL" id="AAFI02000049">
    <property type="protein sequence ID" value="EAL65919.1"/>
    <property type="molecule type" value="Genomic_DNA"/>
</dbReference>
<dbReference type="RefSeq" id="XP_639275.1">
    <property type="nucleotide sequence ID" value="XM_634183.1"/>
</dbReference>
<dbReference type="FunCoup" id="Q54RS6">
    <property type="interactions" value="362"/>
</dbReference>
<dbReference type="PaxDb" id="44689-DDB0237706"/>
<dbReference type="EnsemblProtists" id="EAL65919">
    <property type="protein sequence ID" value="EAL65919"/>
    <property type="gene ID" value="DDB_G0282951"/>
</dbReference>
<dbReference type="GeneID" id="8623843"/>
<dbReference type="KEGG" id="ddi:DDB_G0282951"/>
<dbReference type="dictyBase" id="DDB_G0282951"/>
<dbReference type="VEuPathDB" id="AmoebaDB:DDB_G0282951"/>
<dbReference type="eggNOG" id="ENOG502RIQ0">
    <property type="taxonomic scope" value="Eukaryota"/>
</dbReference>
<dbReference type="HOGENOM" id="CLU_1910572_0_0_1"/>
<dbReference type="InParanoid" id="Q54RS6"/>
<dbReference type="OMA" id="AQIMKFI"/>
<dbReference type="PRO" id="PR:Q54RS6"/>
<dbReference type="Proteomes" id="UP000002195">
    <property type="component" value="Chromosome 4"/>
</dbReference>
<dbReference type="GO" id="GO:0005576">
    <property type="term" value="C:extracellular region"/>
    <property type="evidence" value="ECO:0007669"/>
    <property type="project" value="UniProtKB-SubCell"/>
</dbReference>
<organism>
    <name type="scientific">Dictyostelium discoideum</name>
    <name type="common">Social amoeba</name>
    <dbReference type="NCBI Taxonomy" id="44689"/>
    <lineage>
        <taxon>Eukaryota</taxon>
        <taxon>Amoebozoa</taxon>
        <taxon>Evosea</taxon>
        <taxon>Eumycetozoa</taxon>
        <taxon>Dictyostelia</taxon>
        <taxon>Dictyosteliales</taxon>
        <taxon>Dictyosteliaceae</taxon>
        <taxon>Dictyostelium</taxon>
    </lineage>
</organism>
<sequence>MSRKIIPALTIFFGPILILTAITQFVQKDEEKDLKEFKKNQPANYQSNKENNAQIMKFIRDSAKGDRIDFFAGLEEEMKTIESIKNQNSLNKEKQQQQQQQQQQQQQQQQQQQQQQKPNTPPTPLTTPSTPKK</sequence>
<keyword id="KW-1185">Reference proteome</keyword>
<keyword id="KW-0964">Secreted</keyword>
<keyword id="KW-0732">Signal</keyword>